<name>APT_YERPP</name>
<dbReference type="EC" id="2.4.2.7" evidence="1"/>
<dbReference type="EMBL" id="CP000668">
    <property type="protein sequence ID" value="ABP41122.1"/>
    <property type="molecule type" value="Genomic_DNA"/>
</dbReference>
<dbReference type="RefSeq" id="WP_002208606.1">
    <property type="nucleotide sequence ID" value="NZ_CP009715.1"/>
</dbReference>
<dbReference type="SMR" id="A4TPB0"/>
<dbReference type="GeneID" id="57975588"/>
<dbReference type="KEGG" id="ypp:YPDSF_2760"/>
<dbReference type="PATRIC" id="fig|386656.14.peg.17"/>
<dbReference type="UniPathway" id="UPA00588">
    <property type="reaction ID" value="UER00646"/>
</dbReference>
<dbReference type="GO" id="GO:0005829">
    <property type="term" value="C:cytosol"/>
    <property type="evidence" value="ECO:0007669"/>
    <property type="project" value="TreeGrafter"/>
</dbReference>
<dbReference type="GO" id="GO:0003999">
    <property type="term" value="F:adenine phosphoribosyltransferase activity"/>
    <property type="evidence" value="ECO:0007669"/>
    <property type="project" value="UniProtKB-UniRule"/>
</dbReference>
<dbReference type="GO" id="GO:0006168">
    <property type="term" value="P:adenine salvage"/>
    <property type="evidence" value="ECO:0007669"/>
    <property type="project" value="InterPro"/>
</dbReference>
<dbReference type="GO" id="GO:0044209">
    <property type="term" value="P:AMP salvage"/>
    <property type="evidence" value="ECO:0007669"/>
    <property type="project" value="UniProtKB-UniRule"/>
</dbReference>
<dbReference type="GO" id="GO:0006166">
    <property type="term" value="P:purine ribonucleoside salvage"/>
    <property type="evidence" value="ECO:0007669"/>
    <property type="project" value="UniProtKB-KW"/>
</dbReference>
<dbReference type="CDD" id="cd06223">
    <property type="entry name" value="PRTases_typeI"/>
    <property type="match status" value="1"/>
</dbReference>
<dbReference type="FunFam" id="3.40.50.2020:FF:000004">
    <property type="entry name" value="Adenine phosphoribosyltransferase"/>
    <property type="match status" value="1"/>
</dbReference>
<dbReference type="Gene3D" id="3.40.50.2020">
    <property type="match status" value="1"/>
</dbReference>
<dbReference type="HAMAP" id="MF_00004">
    <property type="entry name" value="Aden_phosphoribosyltr"/>
    <property type="match status" value="1"/>
</dbReference>
<dbReference type="InterPro" id="IPR005764">
    <property type="entry name" value="Ade_phspho_trans"/>
</dbReference>
<dbReference type="InterPro" id="IPR050120">
    <property type="entry name" value="Adenine_PRTase"/>
</dbReference>
<dbReference type="InterPro" id="IPR000836">
    <property type="entry name" value="PRibTrfase_dom"/>
</dbReference>
<dbReference type="InterPro" id="IPR029057">
    <property type="entry name" value="PRTase-like"/>
</dbReference>
<dbReference type="NCBIfam" id="TIGR01090">
    <property type="entry name" value="apt"/>
    <property type="match status" value="1"/>
</dbReference>
<dbReference type="NCBIfam" id="NF002632">
    <property type="entry name" value="PRK02304.1-1"/>
    <property type="match status" value="1"/>
</dbReference>
<dbReference type="NCBIfam" id="NF002633">
    <property type="entry name" value="PRK02304.1-2"/>
    <property type="match status" value="1"/>
</dbReference>
<dbReference type="NCBIfam" id="NF002634">
    <property type="entry name" value="PRK02304.1-3"/>
    <property type="match status" value="1"/>
</dbReference>
<dbReference type="NCBIfam" id="NF002636">
    <property type="entry name" value="PRK02304.1-5"/>
    <property type="match status" value="1"/>
</dbReference>
<dbReference type="PANTHER" id="PTHR11776">
    <property type="entry name" value="ADENINE PHOSPHORIBOSYLTRANSFERASE"/>
    <property type="match status" value="1"/>
</dbReference>
<dbReference type="PANTHER" id="PTHR11776:SF7">
    <property type="entry name" value="PHOSPHORIBOSYLTRANSFERASE DOMAIN-CONTAINING PROTEIN"/>
    <property type="match status" value="1"/>
</dbReference>
<dbReference type="Pfam" id="PF00156">
    <property type="entry name" value="Pribosyltran"/>
    <property type="match status" value="1"/>
</dbReference>
<dbReference type="SUPFAM" id="SSF53271">
    <property type="entry name" value="PRTase-like"/>
    <property type="match status" value="1"/>
</dbReference>
<dbReference type="PROSITE" id="PS00103">
    <property type="entry name" value="PUR_PYR_PR_TRANSFER"/>
    <property type="match status" value="1"/>
</dbReference>
<feature type="chain" id="PRO_1000000377" description="Adenine phosphoribosyltransferase">
    <location>
        <begin position="1"/>
        <end position="187"/>
    </location>
</feature>
<reference key="1">
    <citation type="submission" date="2007-02" db="EMBL/GenBank/DDBJ databases">
        <title>Complete sequence of chromosome of Yersinia pestis Pestoides F.</title>
        <authorList>
            <consortium name="US DOE Joint Genome Institute"/>
            <person name="Copeland A."/>
            <person name="Lucas S."/>
            <person name="Lapidus A."/>
            <person name="Barry K."/>
            <person name="Detter J.C."/>
            <person name="Glavina del Rio T."/>
            <person name="Hammon N."/>
            <person name="Israni S."/>
            <person name="Dalin E."/>
            <person name="Tice H."/>
            <person name="Pitluck S."/>
            <person name="Di Bartolo G."/>
            <person name="Chain P."/>
            <person name="Malfatti S."/>
            <person name="Shin M."/>
            <person name="Vergez L."/>
            <person name="Schmutz J."/>
            <person name="Larimer F."/>
            <person name="Land M."/>
            <person name="Hauser L."/>
            <person name="Worsham P."/>
            <person name="Chu M."/>
            <person name="Bearden S."/>
            <person name="Garcia E."/>
            <person name="Richardson P."/>
        </authorList>
    </citation>
    <scope>NUCLEOTIDE SEQUENCE [LARGE SCALE GENOMIC DNA]</scope>
    <source>
        <strain>Pestoides F</strain>
    </source>
</reference>
<organism>
    <name type="scientific">Yersinia pestis (strain Pestoides F)</name>
    <dbReference type="NCBI Taxonomy" id="386656"/>
    <lineage>
        <taxon>Bacteria</taxon>
        <taxon>Pseudomonadati</taxon>
        <taxon>Pseudomonadota</taxon>
        <taxon>Gammaproteobacteria</taxon>
        <taxon>Enterobacterales</taxon>
        <taxon>Yersiniaceae</taxon>
        <taxon>Yersinia</taxon>
    </lineage>
</organism>
<proteinExistence type="inferred from homology"/>
<gene>
    <name evidence="1" type="primary">apt</name>
    <name type="ordered locus">YPDSF_2760</name>
</gene>
<comment type="function">
    <text evidence="1">Catalyzes a salvage reaction resulting in the formation of AMP, that is energically less costly than de novo synthesis.</text>
</comment>
<comment type="catalytic activity">
    <reaction evidence="1">
        <text>AMP + diphosphate = 5-phospho-alpha-D-ribose 1-diphosphate + adenine</text>
        <dbReference type="Rhea" id="RHEA:16609"/>
        <dbReference type="ChEBI" id="CHEBI:16708"/>
        <dbReference type="ChEBI" id="CHEBI:33019"/>
        <dbReference type="ChEBI" id="CHEBI:58017"/>
        <dbReference type="ChEBI" id="CHEBI:456215"/>
        <dbReference type="EC" id="2.4.2.7"/>
    </reaction>
</comment>
<comment type="pathway">
    <text evidence="1">Purine metabolism; AMP biosynthesis via salvage pathway; AMP from adenine: step 1/1.</text>
</comment>
<comment type="subunit">
    <text evidence="1">Homodimer.</text>
</comment>
<comment type="subcellular location">
    <subcellularLocation>
        <location evidence="1">Cytoplasm</location>
    </subcellularLocation>
</comment>
<comment type="similarity">
    <text evidence="1">Belongs to the purine/pyrimidine phosphoribosyltransferase family.</text>
</comment>
<sequence>MTVSASKTAQQLKYIKDSIKTIPDYPKAGILFRDVTSLLENPKAYSASIKLLSEHYSESGVTKVVGTEARGFLFGAPVALALGVGFVPVRKPGKLPRETISESYELEYGTDTLEIHTDSIQPGDKVLVVDDLLATGGTIEATVKLIRRLGGEVVHAAFIINLPELGGEARLTQQGIHCYSLVSFDGH</sequence>
<protein>
    <recommendedName>
        <fullName evidence="1">Adenine phosphoribosyltransferase</fullName>
        <shortName evidence="1">APRT</shortName>
        <ecNumber evidence="1">2.4.2.7</ecNumber>
    </recommendedName>
</protein>
<accession>A4TPB0</accession>
<keyword id="KW-0963">Cytoplasm</keyword>
<keyword id="KW-0328">Glycosyltransferase</keyword>
<keyword id="KW-0660">Purine salvage</keyword>
<keyword id="KW-0808">Transferase</keyword>
<evidence type="ECO:0000255" key="1">
    <source>
        <dbReference type="HAMAP-Rule" id="MF_00004"/>
    </source>
</evidence>